<evidence type="ECO:0000255" key="1">
    <source>
        <dbReference type="HAMAP-Rule" id="MF_00029"/>
    </source>
</evidence>
<evidence type="ECO:0000256" key="2">
    <source>
        <dbReference type="SAM" id="MobiDB-lite"/>
    </source>
</evidence>
<evidence type="ECO:0000305" key="3"/>
<accession>Q18F55</accession>
<organism>
    <name type="scientific">Haloquadratum walsbyi (strain DSM 16790 / HBSQ001)</name>
    <dbReference type="NCBI Taxonomy" id="362976"/>
    <lineage>
        <taxon>Archaea</taxon>
        <taxon>Methanobacteriati</taxon>
        <taxon>Methanobacteriota</taxon>
        <taxon>Stenosarchaea group</taxon>
        <taxon>Halobacteria</taxon>
        <taxon>Halobacteriales</taxon>
        <taxon>Haloferacaceae</taxon>
        <taxon>Haloquadratum</taxon>
    </lineage>
</organism>
<protein>
    <recommendedName>
        <fullName evidence="1">Small ribosomal subunit protein eS8</fullName>
    </recommendedName>
    <alternativeName>
        <fullName evidence="3">30S ribosomal protein S8e</fullName>
    </alternativeName>
</protein>
<sequence>MKDQGRSTRKRTGGRLHDVSKKKRHQLGREPAETTVDDPRFQVIDARGSDDKLRALSTNIAQVADSGEVTTEEIENVVDNPANVNYIRRNIITKGAIIETSAGQARVTSRPGQTGQVSAVLLEDS</sequence>
<proteinExistence type="inferred from homology"/>
<comment type="subunit">
    <text evidence="1">Part of the 30S ribosomal subunit.</text>
</comment>
<comment type="similarity">
    <text evidence="1">Belongs to the eukaryotic ribosomal protein eS8 family.</text>
</comment>
<keyword id="KW-1185">Reference proteome</keyword>
<keyword id="KW-0687">Ribonucleoprotein</keyword>
<keyword id="KW-0689">Ribosomal protein</keyword>
<gene>
    <name evidence="1" type="primary">rps8e</name>
    <name type="ordered locus">HQ_3309A</name>
</gene>
<reference key="1">
    <citation type="journal article" date="2006" name="BMC Genomics">
        <title>The genome of the square archaeon Haloquadratum walsbyi: life at the limits of water activity.</title>
        <authorList>
            <person name="Bolhuis H."/>
            <person name="Palm P."/>
            <person name="Wende A."/>
            <person name="Falb M."/>
            <person name="Rampp M."/>
            <person name="Rodriguez-Valera F."/>
            <person name="Pfeiffer F."/>
            <person name="Oesterhelt D."/>
        </authorList>
    </citation>
    <scope>NUCLEOTIDE SEQUENCE [LARGE SCALE GENOMIC DNA]</scope>
    <source>
        <strain>DSM 16790 / HBSQ001</strain>
    </source>
</reference>
<feature type="chain" id="PRO_0000304168" description="Small ribosomal subunit protein eS8">
    <location>
        <begin position="1"/>
        <end position="125"/>
    </location>
</feature>
<feature type="region of interest" description="Disordered" evidence="2">
    <location>
        <begin position="1"/>
        <end position="36"/>
    </location>
</feature>
<feature type="compositionally biased region" description="Basic residues" evidence="2">
    <location>
        <begin position="7"/>
        <end position="26"/>
    </location>
</feature>
<feature type="compositionally biased region" description="Basic and acidic residues" evidence="2">
    <location>
        <begin position="27"/>
        <end position="36"/>
    </location>
</feature>
<dbReference type="EMBL" id="AM180088">
    <property type="protein sequence ID" value="CAJ53406.1"/>
    <property type="molecule type" value="Genomic_DNA"/>
</dbReference>
<dbReference type="RefSeq" id="WP_011572508.1">
    <property type="nucleotide sequence ID" value="NC_008212.1"/>
</dbReference>
<dbReference type="SMR" id="Q18F55"/>
<dbReference type="STRING" id="362976.HQ_3309A"/>
<dbReference type="GeneID" id="4194668"/>
<dbReference type="KEGG" id="hwa:HQ_3309A"/>
<dbReference type="eggNOG" id="arCOG04154">
    <property type="taxonomic scope" value="Archaea"/>
</dbReference>
<dbReference type="HOGENOM" id="CLU_080597_2_1_2"/>
<dbReference type="Proteomes" id="UP000001975">
    <property type="component" value="Chromosome"/>
</dbReference>
<dbReference type="GO" id="GO:1990904">
    <property type="term" value="C:ribonucleoprotein complex"/>
    <property type="evidence" value="ECO:0007669"/>
    <property type="project" value="UniProtKB-KW"/>
</dbReference>
<dbReference type="GO" id="GO:0005840">
    <property type="term" value="C:ribosome"/>
    <property type="evidence" value="ECO:0007669"/>
    <property type="project" value="UniProtKB-KW"/>
</dbReference>
<dbReference type="GO" id="GO:0003735">
    <property type="term" value="F:structural constituent of ribosome"/>
    <property type="evidence" value="ECO:0007669"/>
    <property type="project" value="InterPro"/>
</dbReference>
<dbReference type="GO" id="GO:0006412">
    <property type="term" value="P:translation"/>
    <property type="evidence" value="ECO:0007669"/>
    <property type="project" value="UniProtKB-UniRule"/>
</dbReference>
<dbReference type="CDD" id="cd11382">
    <property type="entry name" value="Ribosomal_S8e"/>
    <property type="match status" value="1"/>
</dbReference>
<dbReference type="Gene3D" id="2.40.10.310">
    <property type="match status" value="1"/>
</dbReference>
<dbReference type="HAMAP" id="MF_00029">
    <property type="entry name" value="Ribosomal_eS8"/>
    <property type="match status" value="1"/>
</dbReference>
<dbReference type="InterPro" id="IPR001047">
    <property type="entry name" value="Ribosomal_eS8"/>
</dbReference>
<dbReference type="InterPro" id="IPR020919">
    <property type="entry name" value="Ribosomal_protein_eS8_arc"/>
</dbReference>
<dbReference type="InterPro" id="IPR022309">
    <property type="entry name" value="Ribosomal_Se8/biogenesis_NSA2"/>
</dbReference>
<dbReference type="NCBIfam" id="TIGR00307">
    <property type="entry name" value="eS8"/>
    <property type="match status" value="1"/>
</dbReference>
<dbReference type="PANTHER" id="PTHR10394">
    <property type="entry name" value="40S RIBOSOMAL PROTEIN S8"/>
    <property type="match status" value="1"/>
</dbReference>
<dbReference type="Pfam" id="PF01201">
    <property type="entry name" value="Ribosomal_S8e"/>
    <property type="match status" value="1"/>
</dbReference>
<name>RS8E_HALWD</name>